<gene>
    <name type="ordered locus">MG449</name>
</gene>
<protein>
    <recommendedName>
        <fullName>Uncharacterized protein MG449</fullName>
    </recommendedName>
</protein>
<name>Y449_MYCGE</name>
<keyword id="KW-1185">Reference proteome</keyword>
<keyword id="KW-0694">RNA-binding</keyword>
<keyword id="KW-0820">tRNA-binding</keyword>
<accession>P47687</accession>
<comment type="sequence caution" evidence="2">
    <conflict type="frameshift">
        <sequence resource="EMBL" id="L43967"/>
    </conflict>
</comment>
<proteinExistence type="predicted"/>
<dbReference type="EMBL" id="L43967">
    <property type="status" value="NOT_ANNOTATED_CDS"/>
    <property type="molecule type" value="Genomic_DNA"/>
</dbReference>
<dbReference type="SMR" id="P47687"/>
<dbReference type="FunCoup" id="P47687">
    <property type="interactions" value="6"/>
</dbReference>
<dbReference type="InParanoid" id="P47687"/>
<dbReference type="Proteomes" id="UP000000807">
    <property type="component" value="Chromosome"/>
</dbReference>
<dbReference type="GO" id="GO:0000049">
    <property type="term" value="F:tRNA binding"/>
    <property type="evidence" value="ECO:0007669"/>
    <property type="project" value="UniProtKB-KW"/>
</dbReference>
<dbReference type="CDD" id="cd02796">
    <property type="entry name" value="tRNA_bind_bactPheRS"/>
    <property type="match status" value="1"/>
</dbReference>
<dbReference type="Gene3D" id="2.40.50.140">
    <property type="entry name" value="Nucleic acid-binding proteins"/>
    <property type="match status" value="1"/>
</dbReference>
<dbReference type="Gene3D" id="3.30.1940.10">
    <property type="entry name" value="YtpR-like"/>
    <property type="match status" value="1"/>
</dbReference>
<dbReference type="InterPro" id="IPR012340">
    <property type="entry name" value="NA-bd_OB-fold"/>
</dbReference>
<dbReference type="InterPro" id="IPR002547">
    <property type="entry name" value="tRNA-bd_dom"/>
</dbReference>
<dbReference type="InterPro" id="IPR033714">
    <property type="entry name" value="tRNA_bind_bactPheRS"/>
</dbReference>
<dbReference type="InterPro" id="IPR037154">
    <property type="entry name" value="YtpR-like_sf"/>
</dbReference>
<dbReference type="NCBIfam" id="NF045760">
    <property type="entry name" value="YtpR"/>
    <property type="match status" value="1"/>
</dbReference>
<dbReference type="Pfam" id="PF01588">
    <property type="entry name" value="tRNA_bind"/>
    <property type="match status" value="1"/>
</dbReference>
<dbReference type="SUPFAM" id="SSF50249">
    <property type="entry name" value="Nucleic acid-binding proteins"/>
    <property type="match status" value="1"/>
</dbReference>
<dbReference type="PROSITE" id="PS50886">
    <property type="entry name" value="TRBD"/>
    <property type="match status" value="1"/>
</dbReference>
<evidence type="ECO:0000255" key="1">
    <source>
        <dbReference type="PROSITE-ProRule" id="PRU00209"/>
    </source>
</evidence>
<evidence type="ECO:0000305" key="2"/>
<organism>
    <name type="scientific">Mycoplasma genitalium (strain ATCC 33530 / DSM 19775 / NCTC 10195 / G37)</name>
    <name type="common">Mycoplasmoides genitalium</name>
    <dbReference type="NCBI Taxonomy" id="243273"/>
    <lineage>
        <taxon>Bacteria</taxon>
        <taxon>Bacillati</taxon>
        <taxon>Mycoplasmatota</taxon>
        <taxon>Mycoplasmoidales</taxon>
        <taxon>Mycoplasmoidaceae</taxon>
        <taxon>Mycoplasmoides</taxon>
    </lineage>
</organism>
<feature type="chain" id="PRO_0000210621" description="Uncharacterized protein MG449">
    <location>
        <begin position="1"/>
        <end position="228"/>
    </location>
</feature>
<feature type="domain" description="tRNA-binding" evidence="1">
    <location>
        <begin position="99"/>
        <end position="207"/>
    </location>
</feature>
<reference key="1">
    <citation type="journal article" date="1995" name="Science">
        <title>The minimal gene complement of Mycoplasma genitalium.</title>
        <authorList>
            <person name="Fraser C.M."/>
            <person name="Gocayne J.D."/>
            <person name="White O."/>
            <person name="Adams M.D."/>
            <person name="Clayton R.A."/>
            <person name="Fleischmann R.D."/>
            <person name="Bult C.J."/>
            <person name="Kerlavage A.R."/>
            <person name="Sutton G.G."/>
            <person name="Kelley J.M."/>
            <person name="Fritchman J.L."/>
            <person name="Weidman J.F."/>
            <person name="Small K.V."/>
            <person name="Sandusky M."/>
            <person name="Fuhrmann J.L."/>
            <person name="Nguyen D.T."/>
            <person name="Utterback T.R."/>
            <person name="Saudek D.M."/>
            <person name="Phillips C.A."/>
            <person name="Merrick J.M."/>
            <person name="Tomb J.-F."/>
            <person name="Dougherty B.A."/>
            <person name="Bott K.F."/>
            <person name="Hu P.-C."/>
            <person name="Lucier T.S."/>
            <person name="Peterson S.N."/>
            <person name="Smith H.O."/>
            <person name="Hutchison C.A. III"/>
            <person name="Venter J.C."/>
        </authorList>
    </citation>
    <scope>NUCLEOTIDE SEQUENCE [LARGE SCALE GENOMIC DNA]</scope>
    <source>
        <strain>ATCC 33530 / DSM 19775 / NCTC 10195 / G37</strain>
    </source>
</reference>
<sequence>MFDISKDFVSIFYRKETLKNCMFGIIGSRSETTLRQQNDKDWSFFVNDANRITGFNFFNIKKSFKKFFLSHRFNEGLNYPSLKIMKRISELLGYDLISLANKVPFVVCEVVSVIPIANTHLKRCKVNTGLTKSLDIVCGANNVRVGMKTVLVQVGGVLPSGTVIKKTKIAGFDSVGMLCSEKELNLKQKNEGIIEINPKIKVGKPFIDVYLNKQHSKWVNTKKRVKLS</sequence>